<gene>
    <name evidence="1" type="primary">proS</name>
    <name type="ordered locus">SACOL1282</name>
</gene>
<keyword id="KW-0030">Aminoacyl-tRNA synthetase</keyword>
<keyword id="KW-0067">ATP-binding</keyword>
<keyword id="KW-0963">Cytoplasm</keyword>
<keyword id="KW-0436">Ligase</keyword>
<keyword id="KW-0547">Nucleotide-binding</keyword>
<keyword id="KW-0648">Protein biosynthesis</keyword>
<organism>
    <name type="scientific">Staphylococcus aureus (strain COL)</name>
    <dbReference type="NCBI Taxonomy" id="93062"/>
    <lineage>
        <taxon>Bacteria</taxon>
        <taxon>Bacillati</taxon>
        <taxon>Bacillota</taxon>
        <taxon>Bacilli</taxon>
        <taxon>Bacillales</taxon>
        <taxon>Staphylococcaceae</taxon>
        <taxon>Staphylococcus</taxon>
    </lineage>
</organism>
<sequence length="567" mass="63835">MKQSKVFIPTMRDVPSEAEAQSHRLLLKSGLIKQSTSGIYSYLPLATRVLNNITAIVRQEMERIDSVEILMPALQQAELWEESGRWGAYGPELMRLQDRHGRQFALGPTHEELVTSIVRNELKSYKQLPMTLFQIQSKFRDEKRPRFGLLRGREFIMKDAYSFHADEASLDQTYQDMYQAYSRIFERVGINARPVVADSGAIGGSHTHEFMALSAIGEDTIVYSKESDYAANIEKAEVVYEPNHKHTTVQPLEKIETPNVKTAQELADFLGRPVDEIVKTMIFKVDGEYIMVLVRGHHEINDIKLKSYFGTDNIELATQDEIVNLVGANPGSLGPVIDKEIKIYADNFVQDLNNLVVGANEDGYHLINVNVGRDFNVDEYGDFRFILEGEKLSDGSGAAHFAEGIEVGQVFKLGTKYSESMNATFLDNQGKAQSLIMGCYGIGISRTLSAIVEQNHDDNGIVWPKSVTPFDLHLISINPKKDDQRELADALYAEFNTKFDVLYDDRQERAGVKFNDADLIGLPLRIVVGKRASEGIVEVKERLTGDSEEVHIDDLMTVITNKYDNLK</sequence>
<proteinExistence type="inferred from homology"/>
<name>SYP_STAAC</name>
<evidence type="ECO:0000255" key="1">
    <source>
        <dbReference type="HAMAP-Rule" id="MF_01569"/>
    </source>
</evidence>
<reference key="1">
    <citation type="journal article" date="2005" name="J. Bacteriol.">
        <title>Insights on evolution of virulence and resistance from the complete genome analysis of an early methicillin-resistant Staphylococcus aureus strain and a biofilm-producing methicillin-resistant Staphylococcus epidermidis strain.</title>
        <authorList>
            <person name="Gill S.R."/>
            <person name="Fouts D.E."/>
            <person name="Archer G.L."/>
            <person name="Mongodin E.F."/>
            <person name="DeBoy R.T."/>
            <person name="Ravel J."/>
            <person name="Paulsen I.T."/>
            <person name="Kolonay J.F."/>
            <person name="Brinkac L.M."/>
            <person name="Beanan M.J."/>
            <person name="Dodson R.J."/>
            <person name="Daugherty S.C."/>
            <person name="Madupu R."/>
            <person name="Angiuoli S.V."/>
            <person name="Durkin A.S."/>
            <person name="Haft D.H."/>
            <person name="Vamathevan J.J."/>
            <person name="Khouri H."/>
            <person name="Utterback T.R."/>
            <person name="Lee C."/>
            <person name="Dimitrov G."/>
            <person name="Jiang L."/>
            <person name="Qin H."/>
            <person name="Weidman J."/>
            <person name="Tran K."/>
            <person name="Kang K.H."/>
            <person name="Hance I.R."/>
            <person name="Nelson K.E."/>
            <person name="Fraser C.M."/>
        </authorList>
    </citation>
    <scope>NUCLEOTIDE SEQUENCE [LARGE SCALE GENOMIC DNA]</scope>
    <source>
        <strain>COL</strain>
    </source>
</reference>
<dbReference type="EC" id="6.1.1.15" evidence="1"/>
<dbReference type="EMBL" id="CP000046">
    <property type="protein sequence ID" value="AAW38113.1"/>
    <property type="molecule type" value="Genomic_DNA"/>
</dbReference>
<dbReference type="RefSeq" id="WP_000814099.1">
    <property type="nucleotide sequence ID" value="NC_002951.2"/>
</dbReference>
<dbReference type="SMR" id="Q5HGG8"/>
<dbReference type="KEGG" id="sac:SACOL1282"/>
<dbReference type="HOGENOM" id="CLU_016739_0_0_9"/>
<dbReference type="Proteomes" id="UP000000530">
    <property type="component" value="Chromosome"/>
</dbReference>
<dbReference type="GO" id="GO:0005829">
    <property type="term" value="C:cytosol"/>
    <property type="evidence" value="ECO:0007669"/>
    <property type="project" value="TreeGrafter"/>
</dbReference>
<dbReference type="GO" id="GO:0002161">
    <property type="term" value="F:aminoacyl-tRNA deacylase activity"/>
    <property type="evidence" value="ECO:0007669"/>
    <property type="project" value="InterPro"/>
</dbReference>
<dbReference type="GO" id="GO:0005524">
    <property type="term" value="F:ATP binding"/>
    <property type="evidence" value="ECO:0007669"/>
    <property type="project" value="UniProtKB-UniRule"/>
</dbReference>
<dbReference type="GO" id="GO:0140096">
    <property type="term" value="F:catalytic activity, acting on a protein"/>
    <property type="evidence" value="ECO:0007669"/>
    <property type="project" value="UniProtKB-ARBA"/>
</dbReference>
<dbReference type="GO" id="GO:0004827">
    <property type="term" value="F:proline-tRNA ligase activity"/>
    <property type="evidence" value="ECO:0007669"/>
    <property type="project" value="UniProtKB-UniRule"/>
</dbReference>
<dbReference type="GO" id="GO:0016740">
    <property type="term" value="F:transferase activity"/>
    <property type="evidence" value="ECO:0007669"/>
    <property type="project" value="UniProtKB-ARBA"/>
</dbReference>
<dbReference type="GO" id="GO:0006433">
    <property type="term" value="P:prolyl-tRNA aminoacylation"/>
    <property type="evidence" value="ECO:0007669"/>
    <property type="project" value="UniProtKB-UniRule"/>
</dbReference>
<dbReference type="CDD" id="cd04334">
    <property type="entry name" value="ProRS-INS"/>
    <property type="match status" value="1"/>
</dbReference>
<dbReference type="CDD" id="cd00861">
    <property type="entry name" value="ProRS_anticodon_short"/>
    <property type="match status" value="1"/>
</dbReference>
<dbReference type="CDD" id="cd00779">
    <property type="entry name" value="ProRS_core_prok"/>
    <property type="match status" value="1"/>
</dbReference>
<dbReference type="FunFam" id="3.30.930.10:FF:000043">
    <property type="entry name" value="Proline--tRNA ligase"/>
    <property type="match status" value="1"/>
</dbReference>
<dbReference type="FunFam" id="3.40.50.800:FF:000011">
    <property type="entry name" value="Proline--tRNA ligase"/>
    <property type="match status" value="1"/>
</dbReference>
<dbReference type="Gene3D" id="3.40.50.800">
    <property type="entry name" value="Anticodon-binding domain"/>
    <property type="match status" value="1"/>
</dbReference>
<dbReference type="Gene3D" id="3.30.930.10">
    <property type="entry name" value="Bira Bifunctional Protein, Domain 2"/>
    <property type="match status" value="2"/>
</dbReference>
<dbReference type="Gene3D" id="3.90.960.10">
    <property type="entry name" value="YbaK/aminoacyl-tRNA synthetase-associated domain"/>
    <property type="match status" value="1"/>
</dbReference>
<dbReference type="HAMAP" id="MF_01569">
    <property type="entry name" value="Pro_tRNA_synth_type1"/>
    <property type="match status" value="1"/>
</dbReference>
<dbReference type="InterPro" id="IPR002314">
    <property type="entry name" value="aa-tRNA-synt_IIb"/>
</dbReference>
<dbReference type="InterPro" id="IPR006195">
    <property type="entry name" value="aa-tRNA-synth_II"/>
</dbReference>
<dbReference type="InterPro" id="IPR045864">
    <property type="entry name" value="aa-tRNA-synth_II/BPL/LPL"/>
</dbReference>
<dbReference type="InterPro" id="IPR004154">
    <property type="entry name" value="Anticodon-bd"/>
</dbReference>
<dbReference type="InterPro" id="IPR036621">
    <property type="entry name" value="Anticodon-bd_dom_sf"/>
</dbReference>
<dbReference type="InterPro" id="IPR002316">
    <property type="entry name" value="Pro-tRNA-ligase_IIa"/>
</dbReference>
<dbReference type="InterPro" id="IPR004500">
    <property type="entry name" value="Pro-tRNA-synth_IIa_bac-type"/>
</dbReference>
<dbReference type="InterPro" id="IPR023717">
    <property type="entry name" value="Pro-tRNA-Synthase_IIa_type1"/>
</dbReference>
<dbReference type="InterPro" id="IPR050062">
    <property type="entry name" value="Pro-tRNA_synthetase"/>
</dbReference>
<dbReference type="InterPro" id="IPR044140">
    <property type="entry name" value="ProRS_anticodon_short"/>
</dbReference>
<dbReference type="InterPro" id="IPR033730">
    <property type="entry name" value="ProRS_core_prok"/>
</dbReference>
<dbReference type="InterPro" id="IPR036754">
    <property type="entry name" value="YbaK/aa-tRNA-synt-asso_dom_sf"/>
</dbReference>
<dbReference type="InterPro" id="IPR007214">
    <property type="entry name" value="YbaK/aa-tRNA-synth-assoc-dom"/>
</dbReference>
<dbReference type="NCBIfam" id="NF006625">
    <property type="entry name" value="PRK09194.1"/>
    <property type="match status" value="1"/>
</dbReference>
<dbReference type="NCBIfam" id="TIGR00409">
    <property type="entry name" value="proS_fam_II"/>
    <property type="match status" value="1"/>
</dbReference>
<dbReference type="PANTHER" id="PTHR42753">
    <property type="entry name" value="MITOCHONDRIAL RIBOSOME PROTEIN L39/PROLYL-TRNA LIGASE FAMILY MEMBER"/>
    <property type="match status" value="1"/>
</dbReference>
<dbReference type="PANTHER" id="PTHR42753:SF2">
    <property type="entry name" value="PROLINE--TRNA LIGASE"/>
    <property type="match status" value="1"/>
</dbReference>
<dbReference type="Pfam" id="PF03129">
    <property type="entry name" value="HGTP_anticodon"/>
    <property type="match status" value="1"/>
</dbReference>
<dbReference type="Pfam" id="PF00587">
    <property type="entry name" value="tRNA-synt_2b"/>
    <property type="match status" value="1"/>
</dbReference>
<dbReference type="Pfam" id="PF04073">
    <property type="entry name" value="tRNA_edit"/>
    <property type="match status" value="1"/>
</dbReference>
<dbReference type="PRINTS" id="PR01046">
    <property type="entry name" value="TRNASYNTHPRO"/>
</dbReference>
<dbReference type="SUPFAM" id="SSF52954">
    <property type="entry name" value="Class II aaRS ABD-related"/>
    <property type="match status" value="1"/>
</dbReference>
<dbReference type="SUPFAM" id="SSF55681">
    <property type="entry name" value="Class II aaRS and biotin synthetases"/>
    <property type="match status" value="1"/>
</dbReference>
<dbReference type="SUPFAM" id="SSF55826">
    <property type="entry name" value="YbaK/ProRS associated domain"/>
    <property type="match status" value="1"/>
</dbReference>
<dbReference type="PROSITE" id="PS50862">
    <property type="entry name" value="AA_TRNA_LIGASE_II"/>
    <property type="match status" value="1"/>
</dbReference>
<accession>Q5HGG8</accession>
<comment type="function">
    <text evidence="1">Catalyzes the attachment of proline to tRNA(Pro) in a two-step reaction: proline is first activated by ATP to form Pro-AMP and then transferred to the acceptor end of tRNA(Pro). As ProRS can inadvertently accommodate and process non-cognate amino acids such as alanine and cysteine, to avoid such errors it has two additional distinct editing activities against alanine. One activity is designated as 'pretransfer' editing and involves the tRNA(Pro)-independent hydrolysis of activated Ala-AMP. The other activity is designated 'posttransfer' editing and involves deacylation of mischarged Ala-tRNA(Pro). The misacylated Cys-tRNA(Pro) is not edited by ProRS.</text>
</comment>
<comment type="catalytic activity">
    <reaction evidence="1">
        <text>tRNA(Pro) + L-proline + ATP = L-prolyl-tRNA(Pro) + AMP + diphosphate</text>
        <dbReference type="Rhea" id="RHEA:14305"/>
        <dbReference type="Rhea" id="RHEA-COMP:9700"/>
        <dbReference type="Rhea" id="RHEA-COMP:9702"/>
        <dbReference type="ChEBI" id="CHEBI:30616"/>
        <dbReference type="ChEBI" id="CHEBI:33019"/>
        <dbReference type="ChEBI" id="CHEBI:60039"/>
        <dbReference type="ChEBI" id="CHEBI:78442"/>
        <dbReference type="ChEBI" id="CHEBI:78532"/>
        <dbReference type="ChEBI" id="CHEBI:456215"/>
        <dbReference type="EC" id="6.1.1.15"/>
    </reaction>
</comment>
<comment type="subunit">
    <text evidence="1">Homodimer.</text>
</comment>
<comment type="subcellular location">
    <subcellularLocation>
        <location evidence="1">Cytoplasm</location>
    </subcellularLocation>
</comment>
<comment type="domain">
    <text evidence="1">Consists of three domains: the N-terminal catalytic domain, the editing domain and the C-terminal anticodon-binding domain.</text>
</comment>
<comment type="similarity">
    <text evidence="1">Belongs to the class-II aminoacyl-tRNA synthetase family. ProS type 1 subfamily.</text>
</comment>
<protein>
    <recommendedName>
        <fullName evidence="1">Proline--tRNA ligase</fullName>
        <ecNumber evidence="1">6.1.1.15</ecNumber>
    </recommendedName>
    <alternativeName>
        <fullName evidence="1">Prolyl-tRNA synthetase</fullName>
        <shortName evidence="1">ProRS</shortName>
    </alternativeName>
</protein>
<feature type="chain" id="PRO_0000139338" description="Proline--tRNA ligase">
    <location>
        <begin position="1"/>
        <end position="567"/>
    </location>
</feature>